<proteinExistence type="inferred from homology"/>
<sequence length="179" mass="19238">MAQFSESADVPDMGRRQFMNLLTFGTVTGVALGALYPVVNYFIPPATGGAGGGTTAKDELGNDVSVTKFLENRNAGDRNLVQGLKGDPTYIVVDSKEAIKDYGINAICTHLGCVVPWNVAENKFKCPCHGSQYDETGKVVRGPAPLSLALAHTNVSDDKIVLTPWTETDFRTGDAPWWS</sequence>
<name>UCRI_NOSP7</name>
<comment type="function">
    <text evidence="1">Component of the cytochrome b6-f complex, which mediates electron transfer between photosystem II (PSII) and photosystem I (PSI), cyclic electron flow around PSI, and state transitions.</text>
</comment>
<comment type="catalytic activity">
    <reaction evidence="1">
        <text>2 oxidized [plastocyanin] + a plastoquinol + 2 H(+)(in) = 2 reduced [plastocyanin] + a plastoquinone + 4 H(+)(out)</text>
        <dbReference type="Rhea" id="RHEA:22148"/>
        <dbReference type="Rhea" id="RHEA-COMP:9561"/>
        <dbReference type="Rhea" id="RHEA-COMP:9562"/>
        <dbReference type="Rhea" id="RHEA-COMP:10039"/>
        <dbReference type="Rhea" id="RHEA-COMP:10040"/>
        <dbReference type="ChEBI" id="CHEBI:15378"/>
        <dbReference type="ChEBI" id="CHEBI:17757"/>
        <dbReference type="ChEBI" id="CHEBI:29036"/>
        <dbReference type="ChEBI" id="CHEBI:49552"/>
        <dbReference type="ChEBI" id="CHEBI:62192"/>
        <dbReference type="EC" id="7.1.1.6"/>
    </reaction>
</comment>
<comment type="cofactor">
    <cofactor evidence="1">
        <name>[2Fe-2S] cluster</name>
        <dbReference type="ChEBI" id="CHEBI:190135"/>
    </cofactor>
    <text evidence="1">Binds 1 [2Fe-2S] cluster per subunit.</text>
</comment>
<comment type="subunit">
    <text evidence="1">The 4 large subunits of the cytochrome b6-f complex are cytochrome b6, subunit IV (17 kDa polypeptide, PetD), cytochrome f and the Rieske protein, while the 4 small subunits are PetG, PetL, PetM and PetN. The complex functions as a dimer.</text>
</comment>
<comment type="subcellular location">
    <subcellularLocation>
        <location evidence="1">Cellular thylakoid membrane</location>
        <topology evidence="1">Single-pass membrane protein</topology>
    </subcellularLocation>
    <text evidence="1">The transmembrane helix obliquely spans the membrane in one monomer, and its extrinsic C-terminal domain is part of the other monomer.</text>
</comment>
<comment type="miscellaneous">
    <text>The Rieske iron-sulfur protein is a high potential 2Fe-2S protein.</text>
</comment>
<comment type="similarity">
    <text evidence="1">Belongs to the Rieske iron-sulfur protein family.</text>
</comment>
<accession>B2J3K2</accession>
<evidence type="ECO:0000255" key="1">
    <source>
        <dbReference type="HAMAP-Rule" id="MF_01335"/>
    </source>
</evidence>
<reference key="1">
    <citation type="journal article" date="2013" name="Plant Physiol.">
        <title>A Nostoc punctiforme Sugar Transporter Necessary to Establish a Cyanobacterium-Plant Symbiosis.</title>
        <authorList>
            <person name="Ekman M."/>
            <person name="Picossi S."/>
            <person name="Campbell E.L."/>
            <person name="Meeks J.C."/>
            <person name="Flores E."/>
        </authorList>
    </citation>
    <scope>NUCLEOTIDE SEQUENCE [LARGE SCALE GENOMIC DNA]</scope>
    <source>
        <strain>ATCC 29133 / PCC 73102</strain>
    </source>
</reference>
<gene>
    <name evidence="1" type="primary">petC</name>
    <name type="ordered locus">Npun_R0132</name>
</gene>
<organism>
    <name type="scientific">Nostoc punctiforme (strain ATCC 29133 / PCC 73102)</name>
    <dbReference type="NCBI Taxonomy" id="63737"/>
    <lineage>
        <taxon>Bacteria</taxon>
        <taxon>Bacillati</taxon>
        <taxon>Cyanobacteriota</taxon>
        <taxon>Cyanophyceae</taxon>
        <taxon>Nostocales</taxon>
        <taxon>Nostocaceae</taxon>
        <taxon>Nostoc</taxon>
    </lineage>
</organism>
<keyword id="KW-0001">2Fe-2S</keyword>
<keyword id="KW-1015">Disulfide bond</keyword>
<keyword id="KW-0249">Electron transport</keyword>
<keyword id="KW-0408">Iron</keyword>
<keyword id="KW-0411">Iron-sulfur</keyword>
<keyword id="KW-0472">Membrane</keyword>
<keyword id="KW-0479">Metal-binding</keyword>
<keyword id="KW-1185">Reference proteome</keyword>
<keyword id="KW-0793">Thylakoid</keyword>
<keyword id="KW-1278">Translocase</keyword>
<keyword id="KW-0812">Transmembrane</keyword>
<keyword id="KW-1133">Transmembrane helix</keyword>
<keyword id="KW-0813">Transport</keyword>
<protein>
    <recommendedName>
        <fullName evidence="1">Cytochrome b6-f complex iron-sulfur subunit</fullName>
        <ecNumber evidence="1">7.1.1.6</ecNumber>
    </recommendedName>
    <alternativeName>
        <fullName evidence="1">Plastohydroquinone:plastocyanin oxidoreductase iron-sulfur protein</fullName>
        <shortName evidence="1">ISP</shortName>
        <shortName evidence="1">RISP</shortName>
    </alternativeName>
    <alternativeName>
        <fullName evidence="1">Rieske iron-sulfur protein</fullName>
    </alternativeName>
</protein>
<dbReference type="EC" id="7.1.1.6" evidence="1"/>
<dbReference type="EMBL" id="CP001037">
    <property type="protein sequence ID" value="ACC78932.1"/>
    <property type="molecule type" value="Genomic_DNA"/>
</dbReference>
<dbReference type="RefSeq" id="WP_012406961.1">
    <property type="nucleotide sequence ID" value="NC_010628.1"/>
</dbReference>
<dbReference type="SMR" id="B2J3K2"/>
<dbReference type="STRING" id="63737.Npun_R0132"/>
<dbReference type="EnsemblBacteria" id="ACC78932">
    <property type="protein sequence ID" value="ACC78932"/>
    <property type="gene ID" value="Npun_R0132"/>
</dbReference>
<dbReference type="KEGG" id="npu:Npun_R0132"/>
<dbReference type="eggNOG" id="COG0723">
    <property type="taxonomic scope" value="Bacteria"/>
</dbReference>
<dbReference type="HOGENOM" id="CLU_055690_8_0_3"/>
<dbReference type="OrthoDB" id="9767869at2"/>
<dbReference type="PhylomeDB" id="B2J3K2"/>
<dbReference type="Proteomes" id="UP000001191">
    <property type="component" value="Chromosome"/>
</dbReference>
<dbReference type="GO" id="GO:0031676">
    <property type="term" value="C:plasma membrane-derived thylakoid membrane"/>
    <property type="evidence" value="ECO:0007669"/>
    <property type="project" value="UniProtKB-SubCell"/>
</dbReference>
<dbReference type="GO" id="GO:0051537">
    <property type="term" value="F:2 iron, 2 sulfur cluster binding"/>
    <property type="evidence" value="ECO:0007669"/>
    <property type="project" value="UniProtKB-KW"/>
</dbReference>
<dbReference type="GO" id="GO:0045158">
    <property type="term" value="F:electron transporter, transferring electrons within cytochrome b6/f complex of photosystem II activity"/>
    <property type="evidence" value="ECO:0007669"/>
    <property type="project" value="UniProtKB-UniRule"/>
</dbReference>
<dbReference type="GO" id="GO:0046872">
    <property type="term" value="F:metal ion binding"/>
    <property type="evidence" value="ECO:0007669"/>
    <property type="project" value="UniProtKB-KW"/>
</dbReference>
<dbReference type="GO" id="GO:0004497">
    <property type="term" value="F:monooxygenase activity"/>
    <property type="evidence" value="ECO:0007669"/>
    <property type="project" value="UniProtKB-ARBA"/>
</dbReference>
<dbReference type="GO" id="GO:0016705">
    <property type="term" value="F:oxidoreductase activity, acting on paired donors, with incorporation or reduction of molecular oxygen"/>
    <property type="evidence" value="ECO:0007669"/>
    <property type="project" value="UniProtKB-ARBA"/>
</dbReference>
<dbReference type="GO" id="GO:0009496">
    <property type="term" value="F:plastoquinol--plastocyanin reductase activity"/>
    <property type="evidence" value="ECO:0007669"/>
    <property type="project" value="UniProtKB-UniRule"/>
</dbReference>
<dbReference type="GO" id="GO:0015979">
    <property type="term" value="P:photosynthesis"/>
    <property type="evidence" value="ECO:0007669"/>
    <property type="project" value="UniProtKB-UniRule"/>
</dbReference>
<dbReference type="CDD" id="cd03471">
    <property type="entry name" value="Rieske_cytochrome_b6f"/>
    <property type="match status" value="1"/>
</dbReference>
<dbReference type="FunFam" id="2.102.10.10:FF:000007">
    <property type="entry name" value="Cytochrome b6-f complex iron-sulfur subunit"/>
    <property type="match status" value="1"/>
</dbReference>
<dbReference type="Gene3D" id="2.102.10.10">
    <property type="entry name" value="Rieske [2Fe-2S] iron-sulphur domain"/>
    <property type="match status" value="1"/>
</dbReference>
<dbReference type="Gene3D" id="1.20.5.700">
    <property type="entry name" value="Single helix bin"/>
    <property type="match status" value="1"/>
</dbReference>
<dbReference type="HAMAP" id="MF_01335">
    <property type="entry name" value="Cytb6_f_Rieske"/>
    <property type="match status" value="1"/>
</dbReference>
<dbReference type="InterPro" id="IPR023960">
    <property type="entry name" value="Cyt_b6_f_Rieske"/>
</dbReference>
<dbReference type="InterPro" id="IPR017941">
    <property type="entry name" value="Rieske_2Fe-2S"/>
</dbReference>
<dbReference type="InterPro" id="IPR036922">
    <property type="entry name" value="Rieske_2Fe-2S_sf"/>
</dbReference>
<dbReference type="InterPro" id="IPR014349">
    <property type="entry name" value="Rieske_Fe-S_prot"/>
</dbReference>
<dbReference type="InterPro" id="IPR005805">
    <property type="entry name" value="Rieske_Fe-S_prot_C"/>
</dbReference>
<dbReference type="NCBIfam" id="NF045928">
    <property type="entry name" value="Cytb6fFeSPetC"/>
    <property type="match status" value="1"/>
</dbReference>
<dbReference type="NCBIfam" id="NF010001">
    <property type="entry name" value="PRK13474.1"/>
    <property type="match status" value="1"/>
</dbReference>
<dbReference type="PANTHER" id="PTHR10134">
    <property type="entry name" value="CYTOCHROME B-C1 COMPLEX SUBUNIT RIESKE, MITOCHONDRIAL"/>
    <property type="match status" value="1"/>
</dbReference>
<dbReference type="Pfam" id="PF00355">
    <property type="entry name" value="Rieske"/>
    <property type="match status" value="1"/>
</dbReference>
<dbReference type="Pfam" id="PF25471">
    <property type="entry name" value="TM_PetC"/>
    <property type="match status" value="1"/>
</dbReference>
<dbReference type="PRINTS" id="PR00162">
    <property type="entry name" value="RIESKE"/>
</dbReference>
<dbReference type="SUPFAM" id="SSF50022">
    <property type="entry name" value="ISP domain"/>
    <property type="match status" value="1"/>
</dbReference>
<dbReference type="PROSITE" id="PS51296">
    <property type="entry name" value="RIESKE"/>
    <property type="match status" value="1"/>
</dbReference>
<feature type="chain" id="PRO_1000142568" description="Cytochrome b6-f complex iron-sulfur subunit">
    <location>
        <begin position="1"/>
        <end position="179"/>
    </location>
</feature>
<feature type="transmembrane region" description="Helical" evidence="1">
    <location>
        <begin position="21"/>
        <end position="43"/>
    </location>
</feature>
<feature type="domain" description="Rieske" evidence="1">
    <location>
        <begin position="61"/>
        <end position="162"/>
    </location>
</feature>
<feature type="binding site" evidence="1">
    <location>
        <position position="108"/>
    </location>
    <ligand>
        <name>[2Fe-2S] cluster</name>
        <dbReference type="ChEBI" id="CHEBI:190135"/>
    </ligand>
</feature>
<feature type="binding site" evidence="1">
    <location>
        <position position="110"/>
    </location>
    <ligand>
        <name>[2Fe-2S] cluster</name>
        <dbReference type="ChEBI" id="CHEBI:190135"/>
    </ligand>
</feature>
<feature type="binding site" evidence="1">
    <location>
        <position position="126"/>
    </location>
    <ligand>
        <name>[2Fe-2S] cluster</name>
        <dbReference type="ChEBI" id="CHEBI:190135"/>
    </ligand>
</feature>
<feature type="binding site" evidence="1">
    <location>
        <position position="129"/>
    </location>
    <ligand>
        <name>[2Fe-2S] cluster</name>
        <dbReference type="ChEBI" id="CHEBI:190135"/>
    </ligand>
</feature>
<feature type="disulfide bond" evidence="1">
    <location>
        <begin position="113"/>
        <end position="128"/>
    </location>
</feature>